<name>POLG_PPVD</name>
<organism>
    <name type="scientific">Plum pox potyvirus (strain D)</name>
    <name type="common">PPV</name>
    <dbReference type="NCBI Taxonomy" id="12212"/>
    <lineage>
        <taxon>Viruses</taxon>
        <taxon>Riboviria</taxon>
        <taxon>Orthornavirae</taxon>
        <taxon>Pisuviricota</taxon>
        <taxon>Stelpaviricetes</taxon>
        <taxon>Patatavirales</taxon>
        <taxon>Potyviridae</taxon>
        <taxon>Potyvirus</taxon>
        <taxon>Potyvirus plumpoxi</taxon>
        <taxon>Plum pox virus</taxon>
    </lineage>
</organism>
<comment type="function">
    <molecule>Helper component proteinase</molecule>
    <text evidence="2">Required for aphid transmission and also has proteolytic activity. Only cleaves a Gly-Gly dipeptide at its own C-terminus. Interacts with virions and aphid stylets. Acts as a suppressor of RNA-mediated gene silencing, also known as post-transcriptional gene silencing (PTGS), a mechanism of plant viral defense that limits the accumulation of viral RNAs. May have RNA-binding activity.</text>
</comment>
<comment type="function">
    <molecule>Cytoplasmic inclusion protein</molecule>
    <text>Has helicase activity. It may be involved in replication.</text>
</comment>
<comment type="function">
    <molecule>6 kDa protein 1</molecule>
    <text evidence="6 15">Indispensable for virus replication (PubMed:26962227). Reduces the abundance of host transcripts related to jasmonic acid biosynthesis therefore altering the host defenses (By similarity). In order to increase its own stability, decreases host protein degradation pathways (By similarity).</text>
</comment>
<comment type="function">
    <molecule>6 kDa protein 2</molecule>
    <text evidence="3">Indispensable for virus replication.</text>
</comment>
<comment type="function">
    <molecule>Viral genome-linked protein</molecule>
    <text evidence="5">Mediates the cap-independent, EIF4E-dependent translation of viral genomic RNAs (By similarity). Binds to the cap-binding site of host EIF4E and thus interferes with the host EIF4E-dependent mRNA export and translation (By similarity). VPg-RNA directly binds EIF4E and is a template for transcription (By similarity). Also forms trimeric complexes with EIF4E-EIF4G, which are templates for translation (By similarity).</text>
</comment>
<comment type="function">
    <molecule>Nuclear inclusion protein A</molecule>
    <text evidence="2">Has RNA-binding and proteolytic activities.</text>
</comment>
<comment type="function">
    <molecule>Nuclear inclusion protein B</molecule>
    <text>An RNA-dependent RNA polymerase that plays an essential role in the virus replication.</text>
</comment>
<comment type="function">
    <molecule>Capsid protein</molecule>
    <text evidence="2">Involved in aphid transmission, cell-to-cell and systemis movement, encapsidation of the viral RNA and in the regulation of viral RNA amplification.</text>
</comment>
<comment type="catalytic activity">
    <molecule>Nuclear inclusion protein B</molecule>
    <reaction evidence="8">
        <text>RNA(n) + a ribonucleoside 5'-triphosphate = RNA(n+1) + diphosphate</text>
        <dbReference type="Rhea" id="RHEA:21248"/>
        <dbReference type="Rhea" id="RHEA-COMP:14527"/>
        <dbReference type="Rhea" id="RHEA-COMP:17342"/>
        <dbReference type="ChEBI" id="CHEBI:33019"/>
        <dbReference type="ChEBI" id="CHEBI:61557"/>
        <dbReference type="ChEBI" id="CHEBI:140395"/>
        <dbReference type="EC" id="2.7.7.48"/>
    </reaction>
</comment>
<comment type="catalytic activity">
    <molecule>Nuclear inclusion protein A</molecule>
    <reaction evidence="2">
        <text>Hydrolyzes glutaminyl bonds, and activity is further restricted by preferences for the amino acids in P6 - P1' that vary with the species of potyvirus, e.g. Glu-Xaa-Xaa-Tyr-Xaa-Gln-|-(Ser or Gly) for the enzyme from tobacco etch virus. The natural substrate is the viral polyprotein, but other proteins and oligopeptides containing the appropriate consensus sequence are also cleaved.</text>
        <dbReference type="EC" id="3.4.22.44"/>
    </reaction>
</comment>
<comment type="catalytic activity">
    <molecule>Helper component proteinase</molecule>
    <reaction evidence="2">
        <text>Hydrolyzes a Gly-|-Gly bond at its own C-terminus, commonly in the sequence -Tyr-Xaa-Val-Gly-|-Gly, in the processing of the potyviral polyprotein.</text>
        <dbReference type="EC" id="3.4.22.45"/>
    </reaction>
</comment>
<comment type="subunit">
    <molecule>Viral genome-linked protein</molecule>
    <text evidence="5 14">Interacts with host eIF4E protein (via cap-binding region); this interaction mediates the translation of the VPg-viral RNA conjugates (By similarity). Part of a complex that comprises VPg, RNA, host EIF4E and EIF4G; this interaction mediates the translation of the VPg-viral RNA conjugates (By similarity). Interacts with host eIF(iso)4E both in host nucleus and cytoplasm (PubMed:23382802).</text>
</comment>
<comment type="subcellular location">
    <molecule>6 kDa protein 1</molecule>
    <subcellularLocation>
        <location>Host cytoplasmic vesicle</location>
    </subcellularLocation>
    <text evidence="15">Probably colocalizes with 6K2-induced vesicles associated with host chloroplasts.</text>
</comment>
<comment type="subcellular location">
    <molecule>6 kDa protein 2</molecule>
    <subcellularLocation>
        <location evidence="3">Host cytoplasmic vesicle</location>
    </subcellularLocation>
    <text evidence="3">6K-induced vesicles associate with host chloroplasts.</text>
</comment>
<comment type="subcellular location">
    <molecule>Viral genome-linked protein</molecule>
    <subcellularLocation>
        <location evidence="14">Host nucleus</location>
    </subcellularLocation>
    <subcellularLocation>
        <location evidence="14">Host cytoplasm</location>
    </subcellularLocation>
    <text evidence="14">Binds to host plant eIF(iso)4E proteins in both host nucleus and cytoplasm.</text>
</comment>
<comment type="subcellular location">
    <molecule>Capsid protein</molecule>
    <subcellularLocation>
        <location evidence="16">Virion</location>
    </subcellularLocation>
</comment>
<comment type="alternative products">
    <event type="ribosomal frameshifting"/>
    <isoform>
        <id>P13529-1</id>
        <name>Genome polyprotein</name>
        <sequence type="displayed"/>
    </isoform>
    <isoform>
        <id>P0CK03-1</id>
        <name>P3N-PIPO polyprotein</name>
        <sequence type="external"/>
    </isoform>
</comment>
<comment type="domain">
    <molecule>Helper component proteinase</molecule>
    <text>The N-terminus is involved in interaction with stylets. The central part is involved in interaction with virions and the C-terminus is involved in cell-to cell movement of the virus.</text>
</comment>
<comment type="PTM">
    <molecule>Viral genome-linked protein</molecule>
    <text evidence="3">VPg is uridylylated by the polymerase and is covalently attached to the 5'-end of the genomic RNA. This uridylylated form acts as a nucleotide-peptide primer for the polymerase (By similarity).</text>
</comment>
<comment type="PTM">
    <molecule>Genome polyprotein</molecule>
    <text evidence="1">Potyviral RNA is expressed as two polyproteins which undergo post-translational proteolytic processing. Genome polyprotein is processed by NIa-pro, P1 and HC-pro proteinases resulting in the production of at least ten individual proteins. P3N-PIPO polyprotein is cleaved by P1 and HC-pro proteinases resulting in the production of three individual proteins. The P1 proteinase and the HC-pro cleave only their respective C-termini autocatalytically. 6K1 is essential for proper proteolytic separation of P3 from CI (By similarity).</text>
</comment>
<comment type="miscellaneous">
    <molecule>Isoform Genome polyprotein</molecule>
    <text>Produced by conventional translation.</text>
</comment>
<comment type="similarity">
    <text evidence="16">Belongs to the potyviridae genome polyprotein family.</text>
</comment>
<protein>
    <recommendedName>
        <fullName>Genome polyprotein</fullName>
    </recommendedName>
    <component>
        <recommendedName>
            <fullName>P1 protease</fullName>
            <ecNumber>3.4.21.-</ecNumber>
        </recommendedName>
        <alternativeName>
            <fullName>Leader protease P1</fullName>
        </alternativeName>
        <alternativeName>
            <fullName>N-terminal protein</fullName>
        </alternativeName>
        <alternativeName>
            <fullName>P1 proteinase</fullName>
        </alternativeName>
    </component>
    <component>
        <recommendedName>
            <fullName>Helper component proteinase</fullName>
            <shortName>HC-pro</shortName>
            <ecNumber evidence="2">3.4.22.45</ecNumber>
        </recommendedName>
    </component>
    <component>
        <recommendedName>
            <fullName>Protein P3</fullName>
        </recommendedName>
    </component>
    <component>
        <recommendedName>
            <fullName>6 kDa protein 1</fullName>
            <shortName>6K1</shortName>
        </recommendedName>
    </component>
    <component>
        <recommendedName>
            <fullName>Cytoplasmic inclusion protein</fullName>
            <shortName>CI</shortName>
            <ecNumber>3.6.4.-</ecNumber>
        </recommendedName>
    </component>
    <component>
        <recommendedName>
            <fullName>6 kDa protein 2</fullName>
            <shortName>6K2</shortName>
        </recommendedName>
    </component>
    <component>
        <recommendedName>
            <fullName>Viral genome-linked protein</fullName>
        </recommendedName>
        <alternativeName>
            <fullName>VPg</fullName>
        </alternativeName>
    </component>
    <component>
        <recommendedName>
            <fullName>Nuclear inclusion protein A</fullName>
            <shortName>NI-a</shortName>
            <shortName>NIa</shortName>
            <ecNumber>3.4.22.44</ecNumber>
        </recommendedName>
        <alternativeName>
            <fullName>49 kDa proteinase</fullName>
            <shortName>49 kDa-Pro</shortName>
        </alternativeName>
        <alternativeName>
            <fullName>NIa-pro</fullName>
        </alternativeName>
    </component>
    <component>
        <recommendedName>
            <fullName>Nuclear inclusion protein B</fullName>
            <shortName>NI-b</shortName>
            <shortName>NIb</shortName>
            <ecNumber>2.7.7.48</ecNumber>
        </recommendedName>
        <alternativeName>
            <fullName>RNA-directed RNA polymerase</fullName>
        </alternativeName>
    </component>
    <component>
        <recommendedName>
            <fullName>Capsid protein</fullName>
            <shortName>CP</shortName>
        </recommendedName>
        <alternativeName>
            <fullName>Coat protein</fullName>
        </alternativeName>
    </component>
</protein>
<dbReference type="EC" id="3.4.21.-"/>
<dbReference type="EC" id="3.4.22.45" evidence="2"/>
<dbReference type="EC" id="3.6.4.-"/>
<dbReference type="EC" id="3.4.22.44"/>
<dbReference type="EC" id="2.7.7.48"/>
<dbReference type="EMBL" id="X16415">
    <property type="protein sequence ID" value="CAA34437.1"/>
    <property type="molecule type" value="Genomic_RNA"/>
</dbReference>
<dbReference type="EMBL" id="D00298">
    <property type="protein sequence ID" value="BAA00210.1"/>
    <property type="molecule type" value="Genomic_RNA"/>
</dbReference>
<dbReference type="EMBL" id="KP998124">
    <property type="protein sequence ID" value="ALD08346.1"/>
    <property type="molecule type" value="Genomic_RNA"/>
</dbReference>
<dbReference type="PIR" id="S06929">
    <property type="entry name" value="GNVSPD"/>
</dbReference>
<dbReference type="MEROPS" id="C04.001"/>
<dbReference type="MEROPS" id="C06.001"/>
<dbReference type="MEROPS" id="S30.001"/>
<dbReference type="Proteomes" id="UP000006849">
    <property type="component" value="Segment"/>
</dbReference>
<dbReference type="GO" id="GO:0019029">
    <property type="term" value="C:helical viral capsid"/>
    <property type="evidence" value="ECO:0007669"/>
    <property type="project" value="UniProtKB-KW"/>
</dbReference>
<dbReference type="GO" id="GO:0044161">
    <property type="term" value="C:host cell cytoplasmic vesicle"/>
    <property type="evidence" value="ECO:0007669"/>
    <property type="project" value="UniProtKB-SubCell"/>
</dbReference>
<dbReference type="GO" id="GO:0042025">
    <property type="term" value="C:host cell nucleus"/>
    <property type="evidence" value="ECO:0007669"/>
    <property type="project" value="UniProtKB-SubCell"/>
</dbReference>
<dbReference type="GO" id="GO:0005524">
    <property type="term" value="F:ATP binding"/>
    <property type="evidence" value="ECO:0007669"/>
    <property type="project" value="UniProtKB-KW"/>
</dbReference>
<dbReference type="GO" id="GO:0004197">
    <property type="term" value="F:cysteine-type endopeptidase activity"/>
    <property type="evidence" value="ECO:0007669"/>
    <property type="project" value="InterPro"/>
</dbReference>
<dbReference type="GO" id="GO:0004386">
    <property type="term" value="F:helicase activity"/>
    <property type="evidence" value="ECO:0007669"/>
    <property type="project" value="UniProtKB-KW"/>
</dbReference>
<dbReference type="GO" id="GO:0016818">
    <property type="term" value="F:hydrolase activity, acting on acid anhydrides, in phosphorus-containing anhydrides"/>
    <property type="evidence" value="ECO:0007669"/>
    <property type="project" value="InterPro"/>
</dbReference>
<dbReference type="GO" id="GO:0003723">
    <property type="term" value="F:RNA binding"/>
    <property type="evidence" value="ECO:0007669"/>
    <property type="project" value="InterPro"/>
</dbReference>
<dbReference type="GO" id="GO:0003968">
    <property type="term" value="F:RNA-directed RNA polymerase activity"/>
    <property type="evidence" value="ECO:0007669"/>
    <property type="project" value="UniProtKB-KW"/>
</dbReference>
<dbReference type="GO" id="GO:0008236">
    <property type="term" value="F:serine-type peptidase activity"/>
    <property type="evidence" value="ECO:0007669"/>
    <property type="project" value="UniProtKB-KW"/>
</dbReference>
<dbReference type="GO" id="GO:0005198">
    <property type="term" value="F:structural molecule activity"/>
    <property type="evidence" value="ECO:0007669"/>
    <property type="project" value="InterPro"/>
</dbReference>
<dbReference type="GO" id="GO:0006351">
    <property type="term" value="P:DNA-templated transcription"/>
    <property type="evidence" value="ECO:0007669"/>
    <property type="project" value="InterPro"/>
</dbReference>
<dbReference type="GO" id="GO:0006508">
    <property type="term" value="P:proteolysis"/>
    <property type="evidence" value="ECO:0007669"/>
    <property type="project" value="UniProtKB-KW"/>
</dbReference>
<dbReference type="GO" id="GO:0052170">
    <property type="term" value="P:symbiont-mediated suppression of host innate immune response"/>
    <property type="evidence" value="ECO:0007669"/>
    <property type="project" value="UniProtKB-KW"/>
</dbReference>
<dbReference type="GO" id="GO:0039694">
    <property type="term" value="P:viral RNA genome replication"/>
    <property type="evidence" value="ECO:0007669"/>
    <property type="project" value="InterPro"/>
</dbReference>
<dbReference type="GO" id="GO:0075523">
    <property type="term" value="P:viral translational frameshifting"/>
    <property type="evidence" value="ECO:0007669"/>
    <property type="project" value="UniProtKB-KW"/>
</dbReference>
<dbReference type="CDD" id="cd23175">
    <property type="entry name" value="ps-ssRNAv_Potyviridae_RdRp"/>
    <property type="match status" value="1"/>
</dbReference>
<dbReference type="Gene3D" id="3.30.70.270">
    <property type="match status" value="1"/>
</dbReference>
<dbReference type="Gene3D" id="3.90.70.150">
    <property type="entry name" value="Helper component proteinase"/>
    <property type="match status" value="1"/>
</dbReference>
<dbReference type="Gene3D" id="3.40.50.300">
    <property type="entry name" value="P-loop containing nucleotide triphosphate hydrolases"/>
    <property type="match status" value="2"/>
</dbReference>
<dbReference type="Gene3D" id="2.40.10.10">
    <property type="entry name" value="Trypsin-like serine proteases"/>
    <property type="match status" value="2"/>
</dbReference>
<dbReference type="InterPro" id="IPR011545">
    <property type="entry name" value="DEAD/DEAH_box_helicase_dom"/>
</dbReference>
<dbReference type="InterPro" id="IPR043502">
    <property type="entry name" value="DNA/RNA_pol_sf"/>
</dbReference>
<dbReference type="InterPro" id="IPR001456">
    <property type="entry name" value="HC-pro"/>
</dbReference>
<dbReference type="InterPro" id="IPR031159">
    <property type="entry name" value="HC_PRO_CPD_dom"/>
</dbReference>
<dbReference type="InterPro" id="IPR042308">
    <property type="entry name" value="HC_PRO_CPD_sf"/>
</dbReference>
<dbReference type="InterPro" id="IPR014001">
    <property type="entry name" value="Helicase_ATP-bd"/>
</dbReference>
<dbReference type="InterPro" id="IPR001650">
    <property type="entry name" value="Helicase_C-like"/>
</dbReference>
<dbReference type="InterPro" id="IPR027417">
    <property type="entry name" value="P-loop_NTPase"/>
</dbReference>
<dbReference type="InterPro" id="IPR002540">
    <property type="entry name" value="Pept_S30_P1_potyvir"/>
</dbReference>
<dbReference type="InterPro" id="IPR009003">
    <property type="entry name" value="Peptidase_S1_PA"/>
</dbReference>
<dbReference type="InterPro" id="IPR043504">
    <property type="entry name" value="Peptidase_S1_PA_chymotrypsin"/>
</dbReference>
<dbReference type="InterPro" id="IPR001592">
    <property type="entry name" value="Poty_coat"/>
</dbReference>
<dbReference type="InterPro" id="IPR001730">
    <property type="entry name" value="Potyv_NIa-pro_dom"/>
</dbReference>
<dbReference type="InterPro" id="IPR039560">
    <property type="entry name" value="Potyvirid-P3"/>
</dbReference>
<dbReference type="InterPro" id="IPR013648">
    <property type="entry name" value="PP_Potyviridae"/>
</dbReference>
<dbReference type="InterPro" id="IPR043128">
    <property type="entry name" value="Rev_trsase/Diguanyl_cyclase"/>
</dbReference>
<dbReference type="InterPro" id="IPR001205">
    <property type="entry name" value="RNA-dir_pol_C"/>
</dbReference>
<dbReference type="InterPro" id="IPR007094">
    <property type="entry name" value="RNA-dir_pol_PSvirus"/>
</dbReference>
<dbReference type="PANTHER" id="PTHR43519">
    <property type="entry name" value="ATP-DEPENDENT RNA HELICASE HRPB"/>
    <property type="match status" value="1"/>
</dbReference>
<dbReference type="PANTHER" id="PTHR43519:SF1">
    <property type="entry name" value="ATP-DEPENDENT RNA HELICASE HRPB"/>
    <property type="match status" value="1"/>
</dbReference>
<dbReference type="Pfam" id="PF00270">
    <property type="entry name" value="DEAD"/>
    <property type="match status" value="1"/>
</dbReference>
<dbReference type="Pfam" id="PF00271">
    <property type="entry name" value="Helicase_C"/>
    <property type="match status" value="1"/>
</dbReference>
<dbReference type="Pfam" id="PF00863">
    <property type="entry name" value="Peptidase_C4"/>
    <property type="match status" value="1"/>
</dbReference>
<dbReference type="Pfam" id="PF00851">
    <property type="entry name" value="Peptidase_C6"/>
    <property type="match status" value="1"/>
</dbReference>
<dbReference type="Pfam" id="PF01577">
    <property type="entry name" value="Peptidase_S30"/>
    <property type="match status" value="1"/>
</dbReference>
<dbReference type="Pfam" id="PF00767">
    <property type="entry name" value="Poty_coat"/>
    <property type="match status" value="1"/>
</dbReference>
<dbReference type="Pfam" id="PF08440">
    <property type="entry name" value="Poty_PP"/>
    <property type="match status" value="1"/>
</dbReference>
<dbReference type="Pfam" id="PF13608">
    <property type="entry name" value="Potyvirid-P3"/>
    <property type="match status" value="1"/>
</dbReference>
<dbReference type="Pfam" id="PF00680">
    <property type="entry name" value="RdRP_1"/>
    <property type="match status" value="1"/>
</dbReference>
<dbReference type="PRINTS" id="PR00966">
    <property type="entry name" value="NIAPOTYPTASE"/>
</dbReference>
<dbReference type="SMART" id="SM00487">
    <property type="entry name" value="DEXDc"/>
    <property type="match status" value="1"/>
</dbReference>
<dbReference type="SMART" id="SM00490">
    <property type="entry name" value="HELICc"/>
    <property type="match status" value="1"/>
</dbReference>
<dbReference type="SUPFAM" id="SSF56672">
    <property type="entry name" value="DNA/RNA polymerases"/>
    <property type="match status" value="1"/>
</dbReference>
<dbReference type="SUPFAM" id="SSF52540">
    <property type="entry name" value="P-loop containing nucleoside triphosphate hydrolases"/>
    <property type="match status" value="2"/>
</dbReference>
<dbReference type="SUPFAM" id="SSF50494">
    <property type="entry name" value="Trypsin-like serine proteases"/>
    <property type="match status" value="1"/>
</dbReference>
<dbReference type="PROSITE" id="PS51744">
    <property type="entry name" value="HC_PRO_CPD"/>
    <property type="match status" value="1"/>
</dbReference>
<dbReference type="PROSITE" id="PS51192">
    <property type="entry name" value="HELICASE_ATP_BIND_1"/>
    <property type="match status" value="1"/>
</dbReference>
<dbReference type="PROSITE" id="PS51194">
    <property type="entry name" value="HELICASE_CTER"/>
    <property type="match status" value="1"/>
</dbReference>
<dbReference type="PROSITE" id="PS51436">
    <property type="entry name" value="POTYVIRUS_NIA_PRO"/>
    <property type="match status" value="1"/>
</dbReference>
<dbReference type="PROSITE" id="PS51871">
    <property type="entry name" value="PV_P1_PRO"/>
    <property type="match status" value="1"/>
</dbReference>
<dbReference type="PROSITE" id="PS50507">
    <property type="entry name" value="RDRP_SSRNA_POS"/>
    <property type="match status" value="1"/>
</dbReference>
<feature type="chain" id="PRO_0000420005" description="Genome polyprotein">
    <location>
        <begin position="1"/>
        <end position="3141"/>
    </location>
</feature>
<feature type="chain" id="PRO_0000040315" description="P1 protease" evidence="7">
    <location>
        <begin position="1"/>
        <end position="308"/>
    </location>
</feature>
<feature type="chain" id="PRO_0000040316" description="Helper component proteinase" evidence="7">
    <location>
        <begin position="309"/>
        <end position="767"/>
    </location>
</feature>
<feature type="chain" id="PRO_0000040317" description="Protein P3" evidence="1">
    <location>
        <begin position="768"/>
        <end position="1117"/>
    </location>
</feature>
<feature type="chain" id="PRO_0000040318" description="6 kDa protein 1" evidence="1">
    <location>
        <begin position="1118"/>
        <end position="1169"/>
    </location>
</feature>
<feature type="chain" id="PRO_0000040319" description="Cytoplasmic inclusion protein" evidence="1">
    <location>
        <begin position="1170"/>
        <end position="1804"/>
    </location>
</feature>
<feature type="chain" id="PRO_0000040320" description="6 kDa protein 2" evidence="1">
    <location>
        <begin position="1805"/>
        <end position="1857"/>
    </location>
</feature>
<feature type="chain" id="PRO_0000040321" description="Viral genome-linked protein" evidence="1">
    <location>
        <begin position="1858"/>
        <end position="2050"/>
    </location>
</feature>
<feature type="chain" id="PRO_0000040322" description="Nuclear inclusion protein A" evidence="1">
    <location>
        <begin position="2051"/>
        <end position="2293"/>
    </location>
</feature>
<feature type="chain" id="PRO_0000040323" description="Nuclear inclusion protein B" evidence="1">
    <location>
        <begin position="2294"/>
        <end position="2811"/>
    </location>
</feature>
<feature type="chain" id="PRO_0000040324" description="Capsid protein">
    <location>
        <begin position="2812"/>
        <end position="3141"/>
    </location>
</feature>
<feature type="domain" description="Peptidase S30" evidence="13">
    <location>
        <begin position="165"/>
        <end position="308"/>
    </location>
</feature>
<feature type="domain" description="Peptidase C6" evidence="12">
    <location>
        <begin position="645"/>
        <end position="767"/>
    </location>
</feature>
<feature type="domain" description="Helicase ATP-binding" evidence="9">
    <location>
        <begin position="1241"/>
        <end position="1393"/>
    </location>
</feature>
<feature type="domain" description="Helicase C-terminal" evidence="10">
    <location>
        <begin position="1412"/>
        <end position="1571"/>
    </location>
</feature>
<feature type="domain" description="Peptidase C4" evidence="11">
    <location>
        <begin position="2051"/>
        <end position="2269"/>
    </location>
</feature>
<feature type="domain" description="RdRp catalytic" evidence="8">
    <location>
        <begin position="2535"/>
        <end position="2659"/>
    </location>
</feature>
<feature type="short sequence motif" description="Involved in interaction with stylet and aphid transmission" evidence="1">
    <location>
        <begin position="360"/>
        <end position="363"/>
    </location>
</feature>
<feature type="short sequence motif" description="Involved in virions binding and aphid transmission" evidence="1">
    <location>
        <begin position="619"/>
        <end position="621"/>
    </location>
</feature>
<feature type="short sequence motif" description="DECH box">
    <location>
        <begin position="1343"/>
        <end position="1346"/>
    </location>
</feature>
<feature type="short sequence motif" description="Nuclear localization signal" evidence="7">
    <location>
        <begin position="1898"/>
        <end position="1905"/>
    </location>
</feature>
<feature type="active site" description="For P1 proteinase activity" evidence="13">
    <location>
        <position position="216"/>
    </location>
</feature>
<feature type="active site" description="For P1 proteinase activity" evidence="13">
    <location>
        <position position="225"/>
    </location>
</feature>
<feature type="active site" description="For P1 proteinase activity" evidence="13">
    <location>
        <position position="259"/>
    </location>
</feature>
<feature type="active site" description="For helper component proteinase activity" evidence="12">
    <location>
        <position position="653"/>
    </location>
</feature>
<feature type="active site" description="For helper component proteinase activity" evidence="12">
    <location>
        <position position="726"/>
    </location>
</feature>
<feature type="active site" description="For nuclear inclusion protein A activity" evidence="11">
    <location>
        <position position="2096"/>
    </location>
</feature>
<feature type="active site" description="For nuclear inclusion protein A activity" evidence="11">
    <location>
        <position position="2131"/>
    </location>
</feature>
<feature type="active site" description="For nuclear inclusion protein A activity" evidence="11">
    <location>
        <position position="2201"/>
    </location>
</feature>
<feature type="binding site" evidence="9">
    <location>
        <begin position="1254"/>
        <end position="1261"/>
    </location>
    <ligand>
        <name>ATP</name>
        <dbReference type="ChEBI" id="CHEBI:30616"/>
    </ligand>
</feature>
<feature type="site" description="Cleavage; by P1 proteinase" evidence="13">
    <location>
        <begin position="308"/>
        <end position="309"/>
    </location>
</feature>
<feature type="site" description="Cleavage; by autolysis" evidence="12">
    <location>
        <begin position="767"/>
        <end position="768"/>
    </location>
</feature>
<feature type="site" description="Cleavage; by NIa-pro" evidence="5">
    <location>
        <begin position="1117"/>
        <end position="1118"/>
    </location>
</feature>
<feature type="site" description="Cleavage; by NIa-pro" evidence="5">
    <location>
        <begin position="1169"/>
        <end position="1170"/>
    </location>
</feature>
<feature type="site" description="Cleavage; by NIa-pro" evidence="5">
    <location>
        <begin position="1804"/>
        <end position="1805"/>
    </location>
</feature>
<feature type="site" description="Cleavage; by NIa-pro" evidence="5">
    <location>
        <begin position="1857"/>
        <end position="1858"/>
    </location>
</feature>
<feature type="site" description="Cleavage; by NIa-pro" evidence="5">
    <location>
        <begin position="2050"/>
        <end position="2051"/>
    </location>
</feature>
<feature type="site" description="Cleavage; by NIa-pro" evidence="5">
    <location>
        <begin position="2293"/>
        <end position="2294"/>
    </location>
</feature>
<feature type="site" description="Cleavage; by NIa-pro" evidence="5">
    <location>
        <begin position="2811"/>
        <end position="2812"/>
    </location>
</feature>
<feature type="modified residue" description="O-(5'-phospho-RNA)-tyrosine" evidence="3">
    <location>
        <position position="1920"/>
    </location>
</feature>
<feature type="modified residue" description="Phosphoserine" evidence="4">
    <location>
        <position position="2836"/>
    </location>
</feature>
<feature type="modified residue" description="Phosphoserine" evidence="4">
    <location>
        <position position="2892"/>
    </location>
</feature>
<feature type="modified residue" description="Phosphoserine" evidence="4">
    <location>
        <position position="2912"/>
    </location>
</feature>
<feature type="modified residue" description="Phosphoserine" evidence="4">
    <location>
        <position position="2929"/>
    </location>
</feature>
<feature type="modified residue" description="Phosphothreonine" evidence="4">
    <location>
        <position position="3065"/>
    </location>
</feature>
<feature type="modified residue" description="Phosphothreonine" evidence="4">
    <location>
        <position position="3124"/>
    </location>
</feature>
<feature type="sequence conflict" description="In Ref. 4; ALD08346." evidence="16" ref="4">
    <original>K</original>
    <variation>E</variation>
    <location>
        <position position="98"/>
    </location>
</feature>
<feature type="sequence conflict" description="In Ref. 4; ALD08346." evidence="16" ref="4">
    <original>V</original>
    <variation>L</variation>
    <location>
        <position position="118"/>
    </location>
</feature>
<feature type="sequence conflict" description="In Ref. 4; ALD08346." evidence="16" ref="4">
    <original>V</original>
    <variation>T</variation>
    <location>
        <position position="227"/>
    </location>
</feature>
<feature type="sequence conflict" description="In Ref. 4; ALD08346." evidence="16" ref="4">
    <original>R</original>
    <variation>G</variation>
    <location>
        <position position="244"/>
    </location>
</feature>
<feature type="sequence conflict" description="In Ref. 4; ALD08346." evidence="16" ref="4">
    <original>I</original>
    <variation>M</variation>
    <location>
        <position position="266"/>
    </location>
</feature>
<feature type="sequence conflict" description="In Ref. 4; ALD08346." evidence="16" ref="4">
    <original>S</original>
    <variation>W</variation>
    <location>
        <position position="316"/>
    </location>
</feature>
<feature type="sequence conflict" description="In Ref. 4; ALD08346." evidence="16" ref="4">
    <original>S</original>
    <variation>C</variation>
    <location>
        <position position="335"/>
    </location>
</feature>
<feature type="sequence conflict" description="In Ref. 4; ALD08346." evidence="16" ref="4">
    <original>D</original>
    <variation>Y</variation>
    <location>
        <position position="346"/>
    </location>
</feature>
<feature type="sequence conflict" description="In Ref. 4; ALD08346." evidence="16" ref="4">
    <original>A</original>
    <variation>V</variation>
    <location>
        <position position="393"/>
    </location>
</feature>
<feature type="sequence conflict" description="In Ref. 4; ALD08346." evidence="16" ref="4">
    <location>
        <position position="434"/>
    </location>
</feature>
<feature type="sequence conflict" description="In Ref. 4; ALD08346." evidence="16" ref="4">
    <original>QQ</original>
    <variation>NK</variation>
    <location>
        <begin position="444"/>
        <end position="445"/>
    </location>
</feature>
<feature type="sequence conflict" description="In Ref. 4; ALD08346." evidence="16" ref="4">
    <original>I</original>
    <variation>T</variation>
    <location>
        <position position="554"/>
    </location>
</feature>
<feature type="sequence conflict" description="In Ref. 4; ALD08346." evidence="16" ref="4">
    <original>I</original>
    <variation>M</variation>
    <location>
        <position position="564"/>
    </location>
</feature>
<feature type="sequence conflict" description="In Ref. 4; ALD08346." evidence="16" ref="4">
    <original>R</original>
    <variation>K</variation>
    <location>
        <position position="592"/>
    </location>
</feature>
<feature type="sequence conflict" description="In Ref. 4; ALD08346." evidence="16" ref="4">
    <original>T</original>
    <variation>S</variation>
    <location>
        <position position="629"/>
    </location>
</feature>
<feature type="sequence conflict" description="In Ref. 4; ALD08346." evidence="16" ref="4">
    <original>S</original>
    <variation>L</variation>
    <location>
        <position position="769"/>
    </location>
</feature>
<feature type="sequence conflict" description="In Ref. 4; ALD08346." evidence="16" ref="4">
    <original>T</original>
    <variation>S</variation>
    <location>
        <position position="836"/>
    </location>
</feature>
<feature type="sequence conflict" description="In Ref. 4; ALD08346." evidence="16" ref="4">
    <original>H</original>
    <variation>Y</variation>
    <location>
        <position position="1073"/>
    </location>
</feature>
<feature type="sequence conflict" description="In Ref. 4; ALD08346." evidence="16" ref="4">
    <original>G</original>
    <variation>S</variation>
    <location>
        <position position="1293"/>
    </location>
</feature>
<feature type="sequence conflict" description="In Ref. 4; ALD08346." evidence="16" ref="4">
    <original>V</original>
    <variation>A</variation>
    <location>
        <position position="1678"/>
    </location>
</feature>
<feature type="sequence conflict" description="In Ref. 4; ALD08346." evidence="16" ref="4">
    <original>T</original>
    <variation>N</variation>
    <location>
        <position position="1825"/>
    </location>
</feature>
<feature type="sequence conflict" description="In Ref. 4; ALD08346." evidence="16" ref="4">
    <original>G</original>
    <variation>E</variation>
    <location>
        <position position="1853"/>
    </location>
</feature>
<feature type="sequence conflict" description="In Ref. 4; ALD08346." evidence="16" ref="4">
    <original>D</original>
    <variation>N</variation>
    <location>
        <position position="1944"/>
    </location>
</feature>
<feature type="sequence conflict" description="In Ref. 4; ALD08346." evidence="16" ref="4">
    <original>I</original>
    <variation>V</variation>
    <location>
        <position position="2029"/>
    </location>
</feature>
<feature type="sequence conflict" description="In Ref. 4; ALD08346." evidence="16" ref="4">
    <original>R</original>
    <variation>K</variation>
    <location>
        <position position="2303"/>
    </location>
</feature>
<feature type="sequence conflict" description="In Ref. 4; ALD08346." evidence="16" ref="4">
    <original>D</original>
    <variation>G</variation>
    <location>
        <position position="2817"/>
    </location>
</feature>
<feature type="sequence conflict" description="In Ref. 4; ALD08346." evidence="16" ref="4">
    <original>L</original>
    <variation>F</variation>
    <location>
        <position position="2856"/>
    </location>
</feature>
<feature type="sequence conflict" description="In Ref. 4; ALD08346." evidence="16" ref="4">
    <original>P</original>
    <variation>S</variation>
    <location>
        <position position="2876"/>
    </location>
</feature>
<feature type="sequence conflict" description="In Ref. 4; ALD08346." evidence="16" ref="4">
    <original>K</original>
    <variation>R</variation>
    <location>
        <position position="2936"/>
    </location>
</feature>
<feature type="sequence conflict" description="In Ref. 4; ALD08346." evidence="16" ref="4">
    <original>I</original>
    <variation>V</variation>
    <location>
        <position position="2994"/>
    </location>
</feature>
<reference key="1">
    <citation type="journal article" date="1989" name="Nucleic Acids Res.">
        <title>The complete nucleotide sequence of plum pox virus RNA (strain D).</title>
        <authorList>
            <person name="Teycheney P.Y."/>
            <person name="Tavert G."/>
            <person name="Delbos R."/>
            <person name="Ravelonandro M."/>
            <person name="Dunez J."/>
        </authorList>
    </citation>
    <scope>NUCLEOTIDE SEQUENCE [GENOMIC RNA]</scope>
</reference>
<reference key="2">
    <citation type="journal article" date="1988" name="J. Gen. Virol.">
        <title>Nucleotide sequence of the capsid protein gene of plum pox potyvirus.</title>
        <authorList>
            <person name="Ravelonandro M."/>
            <person name="Varveri C."/>
            <person name="Delbos R."/>
            <person name="Dunez J."/>
        </authorList>
    </citation>
    <scope>NUCLEOTIDE SEQUENCE [GENOMIC RNA] OF 2810-3141</scope>
    <scope>PROTEIN SEQUENCE OF 2812-2828</scope>
</reference>
<reference key="3">
    <citation type="submission" date="1996-12" db="EMBL/GenBank/DDBJ databases">
        <authorList>
            <person name="Le Gall O."/>
        </authorList>
    </citation>
    <scope>SEQUENCE REVISION TO C-TERMINUS</scope>
</reference>
<reference key="4">
    <citation type="journal article" date="2016" name="J. Virol.">
        <title>Plum Pox Virus 6K1 Protein Is Required for Viral Replication and Targets the Viral Replication Complex at the Early Stage of Infection.</title>
        <authorList>
            <person name="Cui H."/>
            <person name="Wang A."/>
        </authorList>
    </citation>
    <scope>NUCLEOTIDE SEQUENCE [GENOMIC RNA]</scope>
    <scope>FUNCTION (6 KDA PROTEIN 1)</scope>
    <scope>SUBCELLULAR LOCATION (6 KDA PROTEIN 1)</scope>
</reference>
<reference key="5">
    <citation type="journal article" date="2001" name="Virus Res.">
        <title>Potyvirus proteins: a wealth of functions.</title>
        <authorList>
            <person name="Urcuqui-Inchima S."/>
            <person name="Haenni A.L."/>
            <person name="Bernardi F."/>
        </authorList>
    </citation>
    <scope>REVIEW</scope>
</reference>
<reference key="6">
    <citation type="journal article" date="2013" name="PLoS ONE">
        <title>Silencing of the host factor eIF(iso)4E gene confers plum pox virus resistance in plum.</title>
        <authorList>
            <person name="Wang X."/>
            <person name="Kohalmi S.E."/>
            <person name="Svircev A."/>
            <person name="Wang A."/>
            <person name="Sanfacon H."/>
            <person name="Tian L."/>
        </authorList>
    </citation>
    <scope>INTERACTION WITH HOST PLANT EIF(ISO)4E (VIRAL GENOME-LINKED PROTEIN)</scope>
</reference>
<keyword id="KW-0067">ATP-binding</keyword>
<keyword id="KW-0167">Capsid protein</keyword>
<keyword id="KW-0191">Covalent protein-RNA linkage</keyword>
<keyword id="KW-0903">Direct protein sequencing</keyword>
<keyword id="KW-1139">Helical capsid protein</keyword>
<keyword id="KW-0347">Helicase</keyword>
<keyword id="KW-1035">Host cytoplasm</keyword>
<keyword id="KW-1036">Host cytoplasmic vesicle</keyword>
<keyword id="KW-1048">Host nucleus</keyword>
<keyword id="KW-0945">Host-virus interaction</keyword>
<keyword id="KW-0378">Hydrolase</keyword>
<keyword id="KW-1090">Inhibition of host innate immune response by virus</keyword>
<keyword id="KW-0547">Nucleotide-binding</keyword>
<keyword id="KW-0548">Nucleotidyltransferase</keyword>
<keyword id="KW-0597">Phosphoprotein</keyword>
<keyword id="KW-0645">Protease</keyword>
<keyword id="KW-0688">Ribosomal frameshifting</keyword>
<keyword id="KW-0696">RNA-directed RNA polymerase</keyword>
<keyword id="KW-0720">Serine protease</keyword>
<keyword id="KW-0941">Suppressor of RNA silencing</keyword>
<keyword id="KW-0788">Thiol protease</keyword>
<keyword id="KW-0808">Transferase</keyword>
<keyword id="KW-0899">Viral immunoevasion</keyword>
<keyword id="KW-0693">Viral RNA replication</keyword>
<keyword id="KW-0946">Virion</keyword>
<organismHost>
    <name type="scientific">Prunus armeniaca</name>
    <name type="common">Apricot</name>
    <name type="synonym">Armeniaca vulgaris</name>
    <dbReference type="NCBI Taxonomy" id="36596"/>
</organismHost>
<organismHost>
    <name type="scientific">Prunus cerasifera</name>
    <name type="common">cherry plum</name>
    <dbReference type="NCBI Taxonomy" id="36595"/>
</organismHost>
<organismHost>
    <name type="scientific">Prunus domestica</name>
    <name type="common">Garden plum</name>
    <dbReference type="NCBI Taxonomy" id="3758"/>
</organismHost>
<organismHost>
    <name type="scientific">Prunus glandulosa</name>
    <dbReference type="NCBI Taxonomy" id="105665"/>
</organismHost>
<organismHost>
    <name type="scientific">Prunus persica</name>
    <name type="common">Peach</name>
    <name type="synonym">Amygdalus persica</name>
    <dbReference type="NCBI Taxonomy" id="3760"/>
</organismHost>
<organismHost>
    <name type="scientific">Prunus salicina</name>
    <dbReference type="NCBI Taxonomy" id="88123"/>
</organismHost>
<organismHost>
    <name type="scientific">Prunus spinosa</name>
    <name type="common">Blackthorn</name>
    <name type="synonym">Prunus domestica var. spinosa</name>
    <dbReference type="NCBI Taxonomy" id="114937"/>
</organismHost>
<proteinExistence type="evidence at protein level"/>
<evidence type="ECO:0000250" key="1"/>
<evidence type="ECO:0000250" key="2">
    <source>
        <dbReference type="UniProtKB" id="P04517"/>
    </source>
</evidence>
<evidence type="ECO:0000250" key="3">
    <source>
        <dbReference type="UniProtKB" id="P09814"/>
    </source>
</evidence>
<evidence type="ECO:0000250" key="4">
    <source>
        <dbReference type="UniProtKB" id="P17767"/>
    </source>
</evidence>
<evidence type="ECO:0000250" key="5">
    <source>
        <dbReference type="UniProtKB" id="P18247"/>
    </source>
</evidence>
<evidence type="ECO:0000250" key="6">
    <source>
        <dbReference type="UniProtKB" id="P89509"/>
    </source>
</evidence>
<evidence type="ECO:0000255" key="7"/>
<evidence type="ECO:0000255" key="8">
    <source>
        <dbReference type="PROSITE-ProRule" id="PRU00539"/>
    </source>
</evidence>
<evidence type="ECO:0000255" key="9">
    <source>
        <dbReference type="PROSITE-ProRule" id="PRU00541"/>
    </source>
</evidence>
<evidence type="ECO:0000255" key="10">
    <source>
        <dbReference type="PROSITE-ProRule" id="PRU00542"/>
    </source>
</evidence>
<evidence type="ECO:0000255" key="11">
    <source>
        <dbReference type="PROSITE-ProRule" id="PRU00766"/>
    </source>
</evidence>
<evidence type="ECO:0000255" key="12">
    <source>
        <dbReference type="PROSITE-ProRule" id="PRU01080"/>
    </source>
</evidence>
<evidence type="ECO:0000255" key="13">
    <source>
        <dbReference type="PROSITE-ProRule" id="PRU01219"/>
    </source>
</evidence>
<evidence type="ECO:0000269" key="14">
    <source>
    </source>
</evidence>
<evidence type="ECO:0000269" key="15">
    <source>
    </source>
</evidence>
<evidence type="ECO:0000305" key="16"/>
<accession>P13529</accession>
<accession>A0A0M4HMR7</accession>
<accession>P89038</accession>
<accession>Q84929</accession>
<sequence>MSTIVFGSFTCHLDAAIHQDNADRLAKAWTRPENRQVSNVHLLCRRAAKSLINTYESATASAWKGLEEKLQPMFAKREFSKTVTKRKGLRCFKESSEKFIEKKLRKQYQEERERFQFVNGPDAIVNQISVDKCEASVWVPFPHIIEKPSFATPSMKKKVVFTKVRMSEASLQLFMRRVAANAKANGQKVEIIGRKRVVGNYTTKSRLTYFRTHVRHLDGSKPRYDLVLDEATKKILQLFANTSRFHHVHKKGEVTPGMSGFVVNPINLSDPMQVYDTDLFIVRGKHNSILVDSRCKVSKKQSNEIIHYSDPGKQFSDGFTNSFMQCKLRETDHQSTSDLDVKECGDVAALVCQAIIPCGKITCLQCAQKYSYMSQQEIRDRFSTVIEQHEKTAMDNYPQFSHVLAFLKRYRELMRVENQNYEAFKDITHMIGEDRKEAPFSHLQQINELIIKGGMMSAQDYIEASDHLRELARYQKNRTENIRSGSIKAFRNKISSKAHVNMQLMCDNQLDTNGNFVWGQREYHAKRFFRNYFDVIDVSEGYRRHIVRENPRGIRKLAIGNLVISTNLAALRKQLLGEECIHFEVSKECTSRRGENFVYQCCCVTHEDGTPLESEIISPTKNHLVVGNTGDSKYVDLPTAKGGAMFIAKAGYCYINIFLAMLININEDEAKSFTKTVRDTLVPKLGTWPSMMDLATACHFLAVLYPETRNAELPRILVDHEAKIFHVVDSFGSLSTGMHVLKANTINQLISFASDTLDSNMKTYLVGGSEVDKCDEFKNVKLLIRSIYKPQIMEQVLKEEPYLLLMSVLSPGVLMALFNSGSLEKATQYWITRSHTLAAITSMLSALAAKVSLASTLNAQMSVIDEHAAVLCDSVFDGTKPYASYMMAVKTLERMKARTESDHTLNDLGFSVLRQATPHLVEKSYLQELEQAWKELSWSEKFSAILESQRWRKHIPKPFIPKDGADLGGRYDISVRSLLGNQYKRLRDVVRRKRDDVVCYTHQSMGKLFCKAIGISTSFLPSTLKMLDMLIVFGLLLSIGATCNSMINEHKHLKQLAADREDKKRFKRLQVLHTRLSEKVGCTPTADEFLEYVGGENPDLLKHAEDLIGDGQVVVHQSKRDSQANLERVVAFVALVMMLFDSERSDGVYKILNKLKGIMGSVDQAVHHQSLDDIEDILDEKKLTVDFVLQSNEVAPTVPFDSTFEKWWTNQLETGNVIPHYRTEGHFLEFTRENAAHIANEVMHGSHQDILIRGAVGSGKSTGLPFHLSKKGHVLLIEPTRPLAENVCKQLRGQPFNVNPTLRMRGMSTFGSTPITVMTSGYALHFLANNPTYLDNYKCIIFDECHVHDASAMAFRCLLSEYSYPGKILKVSATPPGHEVDFKTQKEVKVIVEESLSFQQFVSNLGTGCNSDILKHGVNVLVYVASYNEVDTLSKLLTDRSFKVSKVDGRTMKIGNVEIPTSGTQAKPHFVVATNIIENGVTLDIDVVVDFGLKVVPVLDIDNRLVRYTKKSISYGERIQRLGRVGRNKPGAALRIGFTEKGLTQIPPIIATEAAFLCFTYGLPVMTNGVSTSLLAMCTVKQARTMQQFELSPFYTVALVRFDGTMHQEIFRLLKSYRLRDSEVILNKLAIPNSNVCGWMSVRDYKRQGCNLDLDENIRVPFYVKDIPETLHERIWQVVETHKSDAGFGRICSSSACKIAYTLQTDIHSIPRTIKIIDALLEQERTKQAHFRAMTSQSCSSSNFSLSSITSAIRSKYAKDHTEENIGVLQMAKSQLLEFKNLNIDPSYPELVRNFGALECVHHQTKEGVSKALQLKGHWNKRLITRDATLMLGVLGGGAWMIFSYLRDSFKEGVVHQGFNRRQRQKLKFRQARDNRMAREVYGDDSTMEDYFGSAYSKKGKSKGKTRGMGTKTRKFVNMYGYDPTDYNFVRFVDPLTGHTLDEDPLMDINLVQEHFSQIRNDYIGDDKITMQHIMSNPGIVAYYIKDATQKALKVDLTPHNPLRVCDKTATIAGFPEREFELRQTGHPIFVEPNAIPKINEEGDEEVDHESKSLFRGLRDYNPIASSICQLNNSSGARQSEMFGLGFGGLIVTNQHLFKRNDGELTIRSHHGEFVVKDTKTLKLLPCKGRDIVIIRLPKDFPPFPKRLQFRTPTTEDRVCLIGSNFQTKSISSTMSETSATYPVDNSHFWKHWISTKDGHCGLPIVSTRDGSILGLHSLANSTNTQNFYAAFPDNFETTYLSNQDNDNWIKQWRYNPDEVCWGSLQLKRDIPQSPFTICKLLTDLDGEFVYTQSKTTHWLRDRLEGNLKAVGACPGQLVTKHVVKGKCTLFETYLLTHPEEHEFFRPLMGAYQKSALNKDAYVKDLMKYSKPIVVGAVDCDQFERAVDVVISMLISKGFEECNYVTDPDDIFSALNMKAAVGALYSGKKRDYFKNVSDQDKESFVRASCKRLFMGKKGVWNGSLKAELRPKEKVEANKTRSFTAAPIDTLLGGKVCVDDFNNQFYSLNLHCPWSVGMTKFRGGWDKLLRALPEGWIYCDADGSQFDSSLSPYLINAVLNIRLAFMEEWDIGEQMLSNLYTEIVYTPIATPDGTIVKKFKGNNSGQPSTVVDNTLMVILAMTYSLLKLGYHPDTHDCICRYFVNGDDLVLAVHPAYESIYDELQEHFSQLGLNYTFATKTENKEELWFMSHKGVLYDDMYIPKLEPERIVSILEWDRSNEPIHRLEAICASMVEAWGYKELLREIRKFYSWVLEQAPYNALSKDGKAPYIAETALKKLYTDTEASETEIERYLEAFYDDINDDGESNVVVHQADEREDEEEVDAGKPIVVTAPAATSPILQPPPVIQPAPRTTAPMLNPIFTPATTQPATKPVSQVPGPQLQTFGTYGNEDASPSNSNALVNTNRDRDVDAGSIGTFTVPRLKAMTSKLSLPKVKGKAIMNLNHLAHYSPAQVDLSNTRAPQSCFQTWYEGVKRDYDVTDDEMSIILNGLMVWCIENGTSPNINGMWVMMDGETQVEYPIKPLLDHAKPTFRQIMAHFSNVAEAYIEKRNYEKAYMPRYGIQRNLTDYSLARYAFDFYEMTSTTPVRAREAHIQMKAAALRNVQNRLFGLDGNVGTQEEDTERHTAGDVNRNMHNLLGVRGV</sequence>